<comment type="function">
    <text evidence="1">Catalyzes the deamination of three SAM-derived enzymatic products, namely 5'-deoxyadenosine, S-adenosyl-L-homocysteine, and 5'-methylthioadenosine, to produce the inosine analogs. Can also deaminate adenosine. The preferred substrate for this enzyme is 5'-deoxyadenosine, but all these substrates are efficiently deaminated. Likely functions in a S-adenosyl-L-methionine (SAM) recycling pathway from S-adenosyl-L-homocysteine (SAH) produced from SAM-dependent methylation reactions. May also be involved in the recycling of 5'-deoxyadenosine, whereupon the 5'-deoxyribose moiety of 5'-deoxyinosine is further metabolized to deoxyhexoses used for the biosynthesis of aromatic amino acids in methanogens.</text>
</comment>
<comment type="catalytic activity">
    <reaction evidence="1">
        <text>5'-deoxyadenosine + H2O + H(+) = 5'-deoxyinosine + NH4(+)</text>
        <dbReference type="Rhea" id="RHEA:42892"/>
        <dbReference type="ChEBI" id="CHEBI:15377"/>
        <dbReference type="ChEBI" id="CHEBI:15378"/>
        <dbReference type="ChEBI" id="CHEBI:17319"/>
        <dbReference type="ChEBI" id="CHEBI:28938"/>
        <dbReference type="ChEBI" id="CHEBI:82775"/>
        <dbReference type="EC" id="3.5.4.41"/>
    </reaction>
    <physiologicalReaction direction="left-to-right" evidence="1">
        <dbReference type="Rhea" id="RHEA:42893"/>
    </physiologicalReaction>
</comment>
<comment type="catalytic activity">
    <reaction evidence="1">
        <text>S-adenosyl-L-homocysteine + H2O + H(+) = S-inosyl-L-homocysteine + NH4(+)</text>
        <dbReference type="Rhea" id="RHEA:20716"/>
        <dbReference type="ChEBI" id="CHEBI:15377"/>
        <dbReference type="ChEBI" id="CHEBI:15378"/>
        <dbReference type="ChEBI" id="CHEBI:28938"/>
        <dbReference type="ChEBI" id="CHEBI:57856"/>
        <dbReference type="ChEBI" id="CHEBI:57985"/>
        <dbReference type="EC" id="3.5.4.28"/>
    </reaction>
    <physiologicalReaction direction="left-to-right" evidence="1">
        <dbReference type="Rhea" id="RHEA:20717"/>
    </physiologicalReaction>
</comment>
<comment type="catalytic activity">
    <reaction evidence="1">
        <text>S-methyl-5'-thioadenosine + H2O + H(+) = S-methyl-5'-thioinosine + NH4(+)</text>
        <dbReference type="Rhea" id="RHEA:25025"/>
        <dbReference type="ChEBI" id="CHEBI:15377"/>
        <dbReference type="ChEBI" id="CHEBI:15378"/>
        <dbReference type="ChEBI" id="CHEBI:17509"/>
        <dbReference type="ChEBI" id="CHEBI:28938"/>
        <dbReference type="ChEBI" id="CHEBI:48595"/>
        <dbReference type="EC" id="3.5.4.31"/>
    </reaction>
    <physiologicalReaction direction="left-to-right" evidence="1">
        <dbReference type="Rhea" id="RHEA:25026"/>
    </physiologicalReaction>
</comment>
<comment type="catalytic activity">
    <reaction evidence="1">
        <text>adenosine + H2O + H(+) = inosine + NH4(+)</text>
        <dbReference type="Rhea" id="RHEA:24408"/>
        <dbReference type="ChEBI" id="CHEBI:15377"/>
        <dbReference type="ChEBI" id="CHEBI:15378"/>
        <dbReference type="ChEBI" id="CHEBI:16335"/>
        <dbReference type="ChEBI" id="CHEBI:17596"/>
        <dbReference type="ChEBI" id="CHEBI:28938"/>
        <dbReference type="EC" id="3.5.4.4"/>
    </reaction>
    <physiologicalReaction direction="left-to-right" evidence="1">
        <dbReference type="Rhea" id="RHEA:24409"/>
    </physiologicalReaction>
</comment>
<comment type="cofactor">
    <cofactor evidence="1">
        <name>Zn(2+)</name>
        <dbReference type="ChEBI" id="CHEBI:29105"/>
    </cofactor>
    <text evidence="1">Binds 1 zinc ion per subunit.</text>
</comment>
<comment type="pathway">
    <text evidence="1">Amino-acid biosynthesis; S-adenosyl-L-methionine biosynthesis.</text>
</comment>
<comment type="subunit">
    <text evidence="1">Homotetramer.</text>
</comment>
<comment type="miscellaneous">
    <text evidence="1">SAH is a product of SAM methyltransferases and is known to be a feedback inhibitor of these enzymes. As a result of this inhibition, organisms have evolved efficient enzymes to metabolize SAH via different pathways. The pathway found in methanogens differs from the canonical pathway, it uses the deamination of S-adenosyl-L-homocysteine to form S-inosyl-L-homocysteine for the regeneration of SAM from S-adenosyl-L-homocysteine. 5'-deoxyadenosine is a radical SAM enzyme reaction product which strongly inhibits radical SAM enzymes. A pathway for removing this product must be present in methanogens where the MTA/SAH nucleosidase which normally metabolizes this compound is absent.</text>
</comment>
<comment type="similarity">
    <text evidence="1">Belongs to the metallo-dependent hydrolases superfamily. MTA/SAH deaminase family.</text>
</comment>
<comment type="sequence caution" evidence="2">
    <conflict type="erroneous initiation">
        <sequence resource="EMBL-CDS" id="AAM04695"/>
    </conflict>
</comment>
<reference key="1">
    <citation type="journal article" date="2002" name="Genome Res.">
        <title>The genome of Methanosarcina acetivorans reveals extensive metabolic and physiological diversity.</title>
        <authorList>
            <person name="Galagan J.E."/>
            <person name="Nusbaum C."/>
            <person name="Roy A."/>
            <person name="Endrizzi M.G."/>
            <person name="Macdonald P."/>
            <person name="FitzHugh W."/>
            <person name="Calvo S."/>
            <person name="Engels R."/>
            <person name="Smirnov S."/>
            <person name="Atnoor D."/>
            <person name="Brown A."/>
            <person name="Allen N."/>
            <person name="Naylor J."/>
            <person name="Stange-Thomann N."/>
            <person name="DeArellano K."/>
            <person name="Johnson R."/>
            <person name="Linton L."/>
            <person name="McEwan P."/>
            <person name="McKernan K."/>
            <person name="Talamas J."/>
            <person name="Tirrell A."/>
            <person name="Ye W."/>
            <person name="Zimmer A."/>
            <person name="Barber R.D."/>
            <person name="Cann I."/>
            <person name="Graham D.E."/>
            <person name="Grahame D.A."/>
            <person name="Guss A.M."/>
            <person name="Hedderich R."/>
            <person name="Ingram-Smith C."/>
            <person name="Kuettner H.C."/>
            <person name="Krzycki J.A."/>
            <person name="Leigh J.A."/>
            <person name="Li W."/>
            <person name="Liu J."/>
            <person name="Mukhopadhyay B."/>
            <person name="Reeve J.N."/>
            <person name="Smith K."/>
            <person name="Springer T.A."/>
            <person name="Umayam L.A."/>
            <person name="White O."/>
            <person name="White R.H."/>
            <person name="de Macario E.C."/>
            <person name="Ferry J.G."/>
            <person name="Jarrell K.F."/>
            <person name="Jing H."/>
            <person name="Macario A.J.L."/>
            <person name="Paulsen I.T."/>
            <person name="Pritchett M."/>
            <person name="Sowers K.R."/>
            <person name="Swanson R.V."/>
            <person name="Zinder S.H."/>
            <person name="Lander E."/>
            <person name="Metcalf W.W."/>
            <person name="Birren B."/>
        </authorList>
    </citation>
    <scope>NUCLEOTIDE SEQUENCE [LARGE SCALE GENOMIC DNA]</scope>
    <source>
        <strain>ATCC 35395 / DSM 2834 / JCM 12185 / C2A</strain>
    </source>
</reference>
<gene>
    <name evidence="1" type="primary">dadD</name>
    <name type="ordered locus">MA_1276</name>
</gene>
<keyword id="KW-0378">Hydrolase</keyword>
<keyword id="KW-0479">Metal-binding</keyword>
<keyword id="KW-1185">Reference proteome</keyword>
<keyword id="KW-0862">Zinc</keyword>
<evidence type="ECO:0000255" key="1">
    <source>
        <dbReference type="HAMAP-Rule" id="MF_01281"/>
    </source>
</evidence>
<evidence type="ECO:0000305" key="2"/>
<organism>
    <name type="scientific">Methanosarcina acetivorans (strain ATCC 35395 / DSM 2834 / JCM 12185 / C2A)</name>
    <dbReference type="NCBI Taxonomy" id="188937"/>
    <lineage>
        <taxon>Archaea</taxon>
        <taxon>Methanobacteriati</taxon>
        <taxon>Methanobacteriota</taxon>
        <taxon>Stenosarchaea group</taxon>
        <taxon>Methanomicrobia</taxon>
        <taxon>Methanosarcinales</taxon>
        <taxon>Methanosarcinaceae</taxon>
        <taxon>Methanosarcina</taxon>
    </lineage>
</organism>
<protein>
    <recommendedName>
        <fullName evidence="1">5'-deoxyadenosine deaminase</fullName>
        <shortName evidence="1">5'-dA deaminase</shortName>
        <ecNumber evidence="1">3.5.4.41</ecNumber>
    </recommendedName>
    <alternativeName>
        <fullName evidence="1">5'-methylthioadenosine deaminase</fullName>
        <shortName evidence="1">MTA deaminase</shortName>
        <ecNumber evidence="1">3.5.4.31</ecNumber>
    </alternativeName>
    <alternativeName>
        <fullName evidence="1">Adenosine deaminase</fullName>
        <ecNumber evidence="1">3.5.4.4</ecNumber>
    </alternativeName>
    <alternativeName>
        <fullName evidence="1">S-adenosylhomocysteine deaminase</fullName>
        <shortName evidence="1">SAH deaminase</shortName>
        <ecNumber evidence="1">3.5.4.28</ecNumber>
    </alternativeName>
</protein>
<dbReference type="EC" id="3.5.4.41" evidence="1"/>
<dbReference type="EC" id="3.5.4.31" evidence="1"/>
<dbReference type="EC" id="3.5.4.4" evidence="1"/>
<dbReference type="EC" id="3.5.4.28" evidence="1"/>
<dbReference type="EMBL" id="AE010299">
    <property type="protein sequence ID" value="AAM04695.1"/>
    <property type="status" value="ALT_INIT"/>
    <property type="molecule type" value="Genomic_DNA"/>
</dbReference>
<dbReference type="RefSeq" id="WP_048065074.1">
    <property type="nucleotide sequence ID" value="NC_003552.1"/>
</dbReference>
<dbReference type="SMR" id="Q8TRA4"/>
<dbReference type="FunCoup" id="Q8TRA4">
    <property type="interactions" value="26"/>
</dbReference>
<dbReference type="STRING" id="188937.MA_1276"/>
<dbReference type="EnsemblBacteria" id="AAM04695">
    <property type="protein sequence ID" value="AAM04695"/>
    <property type="gene ID" value="MA_1276"/>
</dbReference>
<dbReference type="GeneID" id="1473164"/>
<dbReference type="KEGG" id="mac:MA_1276"/>
<dbReference type="HOGENOM" id="CLU_012358_2_1_2"/>
<dbReference type="InParanoid" id="Q8TRA4"/>
<dbReference type="OrthoDB" id="372084at2157"/>
<dbReference type="PhylomeDB" id="Q8TRA4"/>
<dbReference type="UniPathway" id="UPA00315"/>
<dbReference type="Proteomes" id="UP000002487">
    <property type="component" value="Chromosome"/>
</dbReference>
<dbReference type="GO" id="GO:0090613">
    <property type="term" value="F:5'-deoxyadenosine deaminase activity"/>
    <property type="evidence" value="ECO:0007669"/>
    <property type="project" value="UniProtKB-UniRule"/>
</dbReference>
<dbReference type="GO" id="GO:0090614">
    <property type="term" value="F:5'-methylthioadenosine deaminase activity"/>
    <property type="evidence" value="ECO:0007669"/>
    <property type="project" value="UniProtKB-EC"/>
</dbReference>
<dbReference type="GO" id="GO:0004000">
    <property type="term" value="F:adenosine deaminase activity"/>
    <property type="evidence" value="ECO:0007669"/>
    <property type="project" value="UniProtKB-UniRule"/>
</dbReference>
<dbReference type="GO" id="GO:0046872">
    <property type="term" value="F:metal ion binding"/>
    <property type="evidence" value="ECO:0007669"/>
    <property type="project" value="UniProtKB-KW"/>
</dbReference>
<dbReference type="GO" id="GO:0050270">
    <property type="term" value="F:S-adenosylhomocysteine deaminase activity"/>
    <property type="evidence" value="ECO:0007669"/>
    <property type="project" value="UniProtKB-EC"/>
</dbReference>
<dbReference type="GO" id="GO:0006556">
    <property type="term" value="P:S-adenosylmethionine biosynthetic process"/>
    <property type="evidence" value="ECO:0007669"/>
    <property type="project" value="UniProtKB-UniRule"/>
</dbReference>
<dbReference type="CDD" id="cd01298">
    <property type="entry name" value="ATZ_TRZ_like"/>
    <property type="match status" value="1"/>
</dbReference>
<dbReference type="FunFam" id="3.20.20.140:FF:000014">
    <property type="entry name" value="5-methylthioadenosine/S-adenosylhomocysteine deaminase"/>
    <property type="match status" value="1"/>
</dbReference>
<dbReference type="Gene3D" id="3.20.20.140">
    <property type="entry name" value="Metal-dependent hydrolases"/>
    <property type="match status" value="1"/>
</dbReference>
<dbReference type="Gene3D" id="2.30.40.10">
    <property type="entry name" value="Urease, subunit C, domain 1"/>
    <property type="match status" value="1"/>
</dbReference>
<dbReference type="HAMAP" id="MF_01281">
    <property type="entry name" value="MTA_SAH_deamin"/>
    <property type="match status" value="1"/>
</dbReference>
<dbReference type="InterPro" id="IPR006680">
    <property type="entry name" value="Amidohydro-rel"/>
</dbReference>
<dbReference type="InterPro" id="IPR023512">
    <property type="entry name" value="Deaminase_MtaD/DadD"/>
</dbReference>
<dbReference type="InterPro" id="IPR011059">
    <property type="entry name" value="Metal-dep_hydrolase_composite"/>
</dbReference>
<dbReference type="InterPro" id="IPR032466">
    <property type="entry name" value="Metal_Hydrolase"/>
</dbReference>
<dbReference type="InterPro" id="IPR050287">
    <property type="entry name" value="MTA/SAH_deaminase"/>
</dbReference>
<dbReference type="NCBIfam" id="NF004701">
    <property type="entry name" value="PRK06038.1"/>
    <property type="match status" value="1"/>
</dbReference>
<dbReference type="PANTHER" id="PTHR43794:SF11">
    <property type="entry name" value="AMIDOHYDROLASE-RELATED DOMAIN-CONTAINING PROTEIN"/>
    <property type="match status" value="1"/>
</dbReference>
<dbReference type="PANTHER" id="PTHR43794">
    <property type="entry name" value="AMINOHYDROLASE SSNA-RELATED"/>
    <property type="match status" value="1"/>
</dbReference>
<dbReference type="Pfam" id="PF01979">
    <property type="entry name" value="Amidohydro_1"/>
    <property type="match status" value="1"/>
</dbReference>
<dbReference type="SUPFAM" id="SSF51338">
    <property type="entry name" value="Composite domain of metallo-dependent hydrolases"/>
    <property type="match status" value="1"/>
</dbReference>
<dbReference type="SUPFAM" id="SSF51556">
    <property type="entry name" value="Metallo-dependent hydrolases"/>
    <property type="match status" value="1"/>
</dbReference>
<feature type="chain" id="PRO_0000312479" description="5'-deoxyadenosine deaminase">
    <location>
        <begin position="1"/>
        <end position="432"/>
    </location>
</feature>
<feature type="binding site" evidence="1">
    <location>
        <position position="63"/>
    </location>
    <ligand>
        <name>Zn(2+)</name>
        <dbReference type="ChEBI" id="CHEBI:29105"/>
    </ligand>
</feature>
<feature type="binding site" evidence="1">
    <location>
        <position position="65"/>
    </location>
    <ligand>
        <name>Zn(2+)</name>
        <dbReference type="ChEBI" id="CHEBI:29105"/>
    </ligand>
</feature>
<feature type="binding site" evidence="1">
    <location>
        <position position="92"/>
    </location>
    <ligand>
        <name>substrate</name>
    </ligand>
</feature>
<feature type="binding site" evidence="1">
    <location>
        <position position="184"/>
    </location>
    <ligand>
        <name>substrate</name>
    </ligand>
</feature>
<feature type="binding site" evidence="1">
    <location>
        <position position="211"/>
    </location>
    <ligand>
        <name>Zn(2+)</name>
        <dbReference type="ChEBI" id="CHEBI:29105"/>
    </ligand>
</feature>
<feature type="binding site" evidence="1">
    <location>
        <position position="214"/>
    </location>
    <ligand>
        <name>substrate</name>
    </ligand>
</feature>
<feature type="binding site" evidence="1">
    <location>
        <position position="299"/>
    </location>
    <ligand>
        <name>substrate</name>
    </ligand>
</feature>
<feature type="binding site" evidence="1">
    <location>
        <position position="299"/>
    </location>
    <ligand>
        <name>Zn(2+)</name>
        <dbReference type="ChEBI" id="CHEBI:29105"/>
    </ligand>
</feature>
<name>DADD_METAC</name>
<proteinExistence type="inferred from homology"/>
<sequence length="432" mass="47157">MADIIIKNAYVLTMDPDAGDLKNGTVVIEDGKITEIGENTKENADTVIDAKGSVVMPGLANTHTHAAMTLFRGYADDLQLAEWLEKHIWPAEAQLKAEDVYKGSLLACLEMIKSGTTSFADMYFYMDETAKAVEASGLRASLSHGLIELWNEEKGEADLKEGKRFVRAWQGAADGRIKTMYGPHAPNTCSEEFLTKVKEEAHRDGAGLHIHVLETEAELNAMKERYGKCSVHLLEDIGFFGPDVLAAHCVWLSDGDIEILRQREVNVSHNPISNMKLASGIAPVYKMLEKGVNVTLGTDGCASNNNLDLFEEIKTAALLHKVSTGNPTALPARQVLEMATVNGAKALGTETGMLKVGKKADMIVVDMKKPHLTPCFDVPSHLVYSAKGCDVRTTIVDGKVLMDNYRVLVMDEEKVIEEARTAAEELVARANA</sequence>
<accession>Q8TRA4</accession>